<keyword id="KW-0963">Cytoplasm</keyword>
<keyword id="KW-0255">Endonuclease</keyword>
<keyword id="KW-0378">Hydrolase</keyword>
<keyword id="KW-0464">Manganese</keyword>
<keyword id="KW-0479">Metal-binding</keyword>
<keyword id="KW-0540">Nuclease</keyword>
<keyword id="KW-1185">Reference proteome</keyword>
<evidence type="ECO:0000255" key="1">
    <source>
        <dbReference type="HAMAP-Rule" id="MF_00052"/>
    </source>
</evidence>
<evidence type="ECO:0000255" key="2">
    <source>
        <dbReference type="PROSITE-ProRule" id="PRU01319"/>
    </source>
</evidence>
<accession>A3DDG7</accession>
<feature type="chain" id="PRO_0000334888" description="Ribonuclease HII">
    <location>
        <begin position="1"/>
        <end position="256"/>
    </location>
</feature>
<feature type="domain" description="RNase H type-2" evidence="2">
    <location>
        <begin position="73"/>
        <end position="256"/>
    </location>
</feature>
<feature type="binding site" evidence="1">
    <location>
        <position position="79"/>
    </location>
    <ligand>
        <name>a divalent metal cation</name>
        <dbReference type="ChEBI" id="CHEBI:60240"/>
    </ligand>
</feature>
<feature type="binding site" evidence="1">
    <location>
        <position position="80"/>
    </location>
    <ligand>
        <name>a divalent metal cation</name>
        <dbReference type="ChEBI" id="CHEBI:60240"/>
    </ligand>
</feature>
<feature type="binding site" evidence="1">
    <location>
        <position position="171"/>
    </location>
    <ligand>
        <name>a divalent metal cation</name>
        <dbReference type="ChEBI" id="CHEBI:60240"/>
    </ligand>
</feature>
<organism>
    <name type="scientific">Acetivibrio thermocellus (strain ATCC 27405 / DSM 1237 / JCM 9322 / NBRC 103400 / NCIMB 10682 / NRRL B-4536 / VPI 7372)</name>
    <name type="common">Clostridium thermocellum</name>
    <dbReference type="NCBI Taxonomy" id="203119"/>
    <lineage>
        <taxon>Bacteria</taxon>
        <taxon>Bacillati</taxon>
        <taxon>Bacillota</taxon>
        <taxon>Clostridia</taxon>
        <taxon>Eubacteriales</taxon>
        <taxon>Oscillospiraceae</taxon>
        <taxon>Acetivibrio</taxon>
    </lineage>
</organism>
<sequence length="256" mass="28782">MGNMTVKQIEKSVEGLDLDKALEKLYCLKAEFGDRVDKIIEKYEKKKLKYEKELNRYLEMCIYEKEAYQRGYKLIAGIDEAGRGPLAGPVVAAAVILPQDVFIEGLNDSKKLTENQREKLFDVINDKAIGVGIGIVDEKQIDEINILNATKKAMKLAVGNLKPVPDILFIDSLKLDDINIEQNSIVKGDAKSVSIAAASIIAKVTRDRILREMDKKYPMYGFARHKGYGTGEHIEAIKKYGICPIHRVSFTKNFIV</sequence>
<comment type="function">
    <text evidence="1">Endonuclease that specifically degrades the RNA of RNA-DNA hybrids.</text>
</comment>
<comment type="catalytic activity">
    <reaction evidence="1">
        <text>Endonucleolytic cleavage to 5'-phosphomonoester.</text>
        <dbReference type="EC" id="3.1.26.4"/>
    </reaction>
</comment>
<comment type="cofactor">
    <cofactor evidence="1">
        <name>Mn(2+)</name>
        <dbReference type="ChEBI" id="CHEBI:29035"/>
    </cofactor>
    <cofactor evidence="1">
        <name>Mg(2+)</name>
        <dbReference type="ChEBI" id="CHEBI:18420"/>
    </cofactor>
    <text evidence="1">Manganese or magnesium. Binds 1 divalent metal ion per monomer in the absence of substrate. May bind a second metal ion after substrate binding.</text>
</comment>
<comment type="subcellular location">
    <subcellularLocation>
        <location evidence="1">Cytoplasm</location>
    </subcellularLocation>
</comment>
<comment type="similarity">
    <text evidence="1">Belongs to the RNase HII family.</text>
</comment>
<dbReference type="EC" id="3.1.26.4" evidence="1"/>
<dbReference type="EMBL" id="CP000568">
    <property type="protein sequence ID" value="ABN51996.1"/>
    <property type="molecule type" value="Genomic_DNA"/>
</dbReference>
<dbReference type="SMR" id="A3DDG7"/>
<dbReference type="STRING" id="203119.Cthe_0761"/>
<dbReference type="KEGG" id="cth:Cthe_0761"/>
<dbReference type="eggNOG" id="COG0164">
    <property type="taxonomic scope" value="Bacteria"/>
</dbReference>
<dbReference type="HOGENOM" id="CLU_036532_2_1_9"/>
<dbReference type="Proteomes" id="UP000002145">
    <property type="component" value="Chromosome"/>
</dbReference>
<dbReference type="GO" id="GO:0005737">
    <property type="term" value="C:cytoplasm"/>
    <property type="evidence" value="ECO:0007669"/>
    <property type="project" value="UniProtKB-SubCell"/>
</dbReference>
<dbReference type="GO" id="GO:0032299">
    <property type="term" value="C:ribonuclease H2 complex"/>
    <property type="evidence" value="ECO:0007669"/>
    <property type="project" value="TreeGrafter"/>
</dbReference>
<dbReference type="GO" id="GO:0030145">
    <property type="term" value="F:manganese ion binding"/>
    <property type="evidence" value="ECO:0007669"/>
    <property type="project" value="UniProtKB-UniRule"/>
</dbReference>
<dbReference type="GO" id="GO:0003723">
    <property type="term" value="F:RNA binding"/>
    <property type="evidence" value="ECO:0007669"/>
    <property type="project" value="InterPro"/>
</dbReference>
<dbReference type="GO" id="GO:0004523">
    <property type="term" value="F:RNA-DNA hybrid ribonuclease activity"/>
    <property type="evidence" value="ECO:0007669"/>
    <property type="project" value="UniProtKB-UniRule"/>
</dbReference>
<dbReference type="GO" id="GO:0043137">
    <property type="term" value="P:DNA replication, removal of RNA primer"/>
    <property type="evidence" value="ECO:0007669"/>
    <property type="project" value="TreeGrafter"/>
</dbReference>
<dbReference type="GO" id="GO:0006298">
    <property type="term" value="P:mismatch repair"/>
    <property type="evidence" value="ECO:0007669"/>
    <property type="project" value="TreeGrafter"/>
</dbReference>
<dbReference type="CDD" id="cd07182">
    <property type="entry name" value="RNase_HII_bacteria_HII_like"/>
    <property type="match status" value="1"/>
</dbReference>
<dbReference type="FunFam" id="3.30.420.10:FF:000006">
    <property type="entry name" value="Ribonuclease HII"/>
    <property type="match status" value="1"/>
</dbReference>
<dbReference type="Gene3D" id="3.30.420.10">
    <property type="entry name" value="Ribonuclease H-like superfamily/Ribonuclease H"/>
    <property type="match status" value="1"/>
</dbReference>
<dbReference type="HAMAP" id="MF_00052_B">
    <property type="entry name" value="RNase_HII_B"/>
    <property type="match status" value="1"/>
</dbReference>
<dbReference type="InterPro" id="IPR022898">
    <property type="entry name" value="RNase_HII"/>
</dbReference>
<dbReference type="InterPro" id="IPR001352">
    <property type="entry name" value="RNase_HII/HIII"/>
</dbReference>
<dbReference type="InterPro" id="IPR024567">
    <property type="entry name" value="RNase_HII/HIII_dom"/>
</dbReference>
<dbReference type="InterPro" id="IPR012337">
    <property type="entry name" value="RNaseH-like_sf"/>
</dbReference>
<dbReference type="InterPro" id="IPR036397">
    <property type="entry name" value="RNaseH_sf"/>
</dbReference>
<dbReference type="NCBIfam" id="NF000594">
    <property type="entry name" value="PRK00015.1-1"/>
    <property type="match status" value="1"/>
</dbReference>
<dbReference type="NCBIfam" id="NF000595">
    <property type="entry name" value="PRK00015.1-3"/>
    <property type="match status" value="1"/>
</dbReference>
<dbReference type="PANTHER" id="PTHR10954">
    <property type="entry name" value="RIBONUCLEASE H2 SUBUNIT A"/>
    <property type="match status" value="1"/>
</dbReference>
<dbReference type="PANTHER" id="PTHR10954:SF18">
    <property type="entry name" value="RIBONUCLEASE HII"/>
    <property type="match status" value="1"/>
</dbReference>
<dbReference type="Pfam" id="PF01351">
    <property type="entry name" value="RNase_HII"/>
    <property type="match status" value="1"/>
</dbReference>
<dbReference type="SUPFAM" id="SSF53098">
    <property type="entry name" value="Ribonuclease H-like"/>
    <property type="match status" value="1"/>
</dbReference>
<dbReference type="PROSITE" id="PS51975">
    <property type="entry name" value="RNASE_H_2"/>
    <property type="match status" value="1"/>
</dbReference>
<proteinExistence type="inferred from homology"/>
<name>RNH2_ACET2</name>
<gene>
    <name evidence="1" type="primary">rnhB</name>
    <name type="ordered locus">Cthe_0761</name>
</gene>
<reference key="1">
    <citation type="submission" date="2007-02" db="EMBL/GenBank/DDBJ databases">
        <title>Complete sequence of Clostridium thermocellum ATCC 27405.</title>
        <authorList>
            <consortium name="US DOE Joint Genome Institute"/>
            <person name="Copeland A."/>
            <person name="Lucas S."/>
            <person name="Lapidus A."/>
            <person name="Barry K."/>
            <person name="Detter J.C."/>
            <person name="Glavina del Rio T."/>
            <person name="Hammon N."/>
            <person name="Israni S."/>
            <person name="Dalin E."/>
            <person name="Tice H."/>
            <person name="Pitluck S."/>
            <person name="Chertkov O."/>
            <person name="Brettin T."/>
            <person name="Bruce D."/>
            <person name="Han C."/>
            <person name="Tapia R."/>
            <person name="Gilna P."/>
            <person name="Schmutz J."/>
            <person name="Larimer F."/>
            <person name="Land M."/>
            <person name="Hauser L."/>
            <person name="Kyrpides N."/>
            <person name="Mikhailova N."/>
            <person name="Wu J.H.D."/>
            <person name="Newcomb M."/>
            <person name="Richardson P."/>
        </authorList>
    </citation>
    <scope>NUCLEOTIDE SEQUENCE [LARGE SCALE GENOMIC DNA]</scope>
    <source>
        <strain>ATCC 27405 / DSM 1237 / JCM 9322 / NBRC 103400 / NCIMB 10682 / NRRL B-4536 / VPI 7372</strain>
    </source>
</reference>
<protein>
    <recommendedName>
        <fullName evidence="1">Ribonuclease HII</fullName>
        <shortName evidence="1">RNase HII</shortName>
        <ecNumber evidence="1">3.1.26.4</ecNumber>
    </recommendedName>
</protein>